<comment type="function">
    <text evidence="2 3">Molecular chaperone implicated in a wide variety of cellular processes, including protection of the proteome from stress, folding and transport of newly synthesized polypeptides, chaperone-mediated autophagy, activation of proteolysis of misfolded proteins, formation and dissociation of protein complexes, and antigen presentation. Plays a pivotal role in the protein quality control system, ensuring the correct folding of proteins, the re-folding of misfolded proteins and controlling the targeting of proteins for subsequent degradation. This is achieved through cycles of ATP binding, ATP hydrolysis and ADP release, mediated by co-chaperones. The co-chaperones have been shown to not only regulate different steps of the ATPase cycle of HSP70, but they also have an individual specificity such that one co-chaperone may promote folding of a substrate while another may promote degradation. The affinity of HSP70 for polypeptides is regulated by its nucleotide bound state. In the ATP-bound form, it has a low affinity for substrate proteins. However, upon hydrolysis of the ATP to ADP, it undergoes a conformational change that increases its affinity for substrate proteins. HSP70 goes through repeated cycles of ATP hydrolysis and nucleotide exchange, which permits cycles of substrate binding and release. The HSP70-associated co-chaperones are of three types: J-domain co-chaperones HSP40s (stimulate ATPase hydrolysis by HSP70), the nucleotide exchange factors (NEF) such as BAG1/2/3 (facilitate conversion of HSP70 from the ADP-bound to the ATP-bound state thereby promoting substrate release), and the TPR domain chaperones such as HOPX and STUB1. Plays a critical role in mitochondrial import, delivers preproteins to the mitochondrial import receptor TOMM70. Acts as a repressor of transcriptional activation. Inhibits the transcriptional coactivator activity of CITED1 on Smad-mediated transcription. Component of the PRP19-CDC5L complex that forms an integral part of the spliceosome and is required for activating pre-mRNA splicing. May have a scaffolding role in the spliceosome assembly as it contacts all other components of the core complex. Binds bacterial lipopolysaccharide (LPS) and mediates LPS-induced inflammatory response, including TNF secretion by monocytes. Substrate recognition component in chaperone-mediated autophagy (CMA), a selective protein degradation process that mediates degradation of proteins with a -KFERQ motif: HSPA8/HSC70 specifically recognizes and binds cytosolic proteins bearing a -KFERQ motif and promotes their recruitment to the surface of the lysosome where they bind to lysosomal protein LAMP2. KFERQ motif-containing proteins are eventually transported into the lysosomal lumen where they are degraded. In conjunction with LAMP2, facilitates MHC class II presentation of cytoplasmic antigens by guiding antigens to the lysosomal membrane for interaction with LAMP2 which then elicits MHC class II presentation of peptides to the cell membrane. Participates in the ER-associated degradation (ERAD) quality control pathway in conjunction with J domain-containing co-chaperones and the E3 ligase STUB1. It is recruited to clathrin-coated vesicles through its interaction with DNAJC6 leading to activation of HSPA8/HSC70 ATPase activity and therefore uncoating of clathrin-coated vesicles (By similarity).</text>
</comment>
<comment type="catalytic activity">
    <reaction evidence="2">
        <text>ATP + H2O = ADP + phosphate + H(+)</text>
        <dbReference type="Rhea" id="RHEA:13065"/>
        <dbReference type="ChEBI" id="CHEBI:15377"/>
        <dbReference type="ChEBI" id="CHEBI:15378"/>
        <dbReference type="ChEBI" id="CHEBI:30616"/>
        <dbReference type="ChEBI" id="CHEBI:43474"/>
        <dbReference type="ChEBI" id="CHEBI:456216"/>
        <dbReference type="EC" id="3.6.4.10"/>
    </reaction>
</comment>
<comment type="subunit">
    <text evidence="2 3 4 6 8 9 10 12">Component of the chaperone-assisted selective autophagy (CASA) complex consisting of BAG3, HSPA8/HSC70, HSPB8 and STUB1/CHIP (PubMed:20060297). Identified in a IGF2BP1-dependent mRNP granule complex containing untranslated mRNAs (By similarity). Interacts with PACRG (By similarity). Interacts with DNAJC7 (By similarity). Interacts with DNAJB12 (via J domain) (By similarity). Interacts with DNAJB14 (via J domain) (By similarity). Interacts (via C-terminus) with the E3 ligase STUB1 forming a 210 kDa complex of one STUB1 and two HSPA8 molecules (By similarity). Interacts with CITED1 (via N-terminus); the interaction suppresses the association of CITED1 to p300/CBP and Smad-mediated transcription transactivation (By similarity). Component of the PRP19-CDC5L splicing complex composed of a core complex comprising a homotetramer of PRPF19, CDC5L, PLRG1 and BCAS2, and at least three less stably associated proteins CTNNBL1, CWC15 and HSPA8 (By similarity). Interacts with IRAK1BP1 and HSPH1/HSP105 (PubMed:15292236, PubMed:17233114, PubMed:9675148). Interacts with TRIM5 (By similarity). Part of a complex composed at least of ASH2L, EMSY, HCFC1, HSPA8, CCAR2, MATR3, MKI67, RBBP5, TUBB2A, WDR5 and ZNF335; this complex may have a histone H3-specific methyltransferase activity (By similarity). Following LPS binding, may form a complex with CXCR4, GDF5 and HSP90AA1 (By similarity). Interacts with PRKN (By similarity). Interacts with FOXP3 (By similarity). Interacts with DNAJC9 (via J domain) (By similarity). Interacts with MLLT11 (By similarity). Interacts with RNF207 (By similarity). Interacts with DNAJC21 (By similarity). Interacts with DNAJB2 (By similarity). Interacts with TTC1 (via TPR repeats) (By similarity). Interacts with SGTA (via TPR repeats) (By similarity). Interacts with HSF1 (via transactivation domain) (By similarity). Interacts with HOPX, STUB1, HSP40, HSP90, BAG2 and BAG3 (By similarity). Interacts with DNAJC12 (By similarity). Interacts with HSPC138 (By similarity). Interacts with ZMYND10 (By similarity). Interacts with VGF-derived peptide TLQP-21 (By similarity). Interacts with BCL2L1, GIMAP5 and MCL1; the interaction with BCL2L1 or MCL1 is impaired in the absence of GIMAP5 (PubMed:21502331). Interacts with NLPR12 (By similarity). Interacts with TTC4 (By similarity). Interacts with TOMM70; the interaction is required for preprotein mitochondrial import (By similarity). May interact with DNJC9; the interaction seems to be histone-dependent (By similarity). Interacts with BAG5 and JPH2; the interaction with JPH2 is increased in the presence of BAG5 (By similarity). Interacts with DNAJC6 (via J domain) in an ATP-dependent manner; this interaction stimulates the HSPA8's ATPase activity. Forms a complex composed of HSPA8, CLTC and DNAJC6 (By similarity). Interacts with HSPA8; this interaction modulates migratory and antigen-presenting capacities of dendritic cells (By similarity).</text>
</comment>
<comment type="interaction">
    <interactant intactId="EBI-433443">
        <id>P63017</id>
    </interactant>
    <interactant intactId="EBI-301550">
        <id>O88447</id>
        <label>Klc1</label>
    </interactant>
    <organismsDiffer>false</organismsDiffer>
    <experiments>3</experiments>
</comment>
<comment type="interaction">
    <interactant intactId="EBI-433443">
        <id>P63017</id>
    </interactant>
    <interactant intactId="EBI-16156700">
        <id>P43883</id>
        <label>Plin2</label>
    </interactant>
    <organismsDiffer>false</organismsDiffer>
    <experiments>3</experiments>
</comment>
<comment type="interaction">
    <interactant intactId="EBI-433443">
        <id>P63017</id>
    </interactant>
    <interactant intactId="EBI-643495">
        <id>Q9DBG5</id>
        <label>Plin3</label>
    </interactant>
    <organismsDiffer>false</organismsDiffer>
    <experiments>2</experiments>
</comment>
<comment type="interaction">
    <interactant intactId="EBI-433443">
        <id>P63017</id>
    </interactant>
    <interactant intactId="EBI-6933128">
        <id>O41974</id>
        <label>GAMMAHV.ORF73</label>
    </interactant>
    <organismsDiffer>true</organismsDiffer>
    <experiments>3</experiments>
</comment>
<comment type="subcellular location">
    <subcellularLocation>
        <location evidence="2">Cytoplasm</location>
    </subcellularLocation>
    <subcellularLocation>
        <location evidence="2">Melanosome</location>
    </subcellularLocation>
    <subcellularLocation>
        <location evidence="2">Nucleus</location>
        <location evidence="2">Nucleolus</location>
    </subcellularLocation>
    <subcellularLocation>
        <location evidence="2">Cell membrane</location>
    </subcellularLocation>
    <subcellularLocation>
        <location evidence="2">Lysosome membrane</location>
        <topology evidence="2">Peripheral membrane protein</topology>
        <orientation evidence="2">Cytoplasmic side</orientation>
    </subcellularLocation>
    <text evidence="2">Localized in cytoplasmic mRNP granules containing untranslated mRNAs. Translocates rapidly from the cytoplasm to the nuclei, and especially to the nucleoli, upon heat shock.</text>
</comment>
<comment type="tissue specificity">
    <text>Ubiquitous.</text>
</comment>
<comment type="induction">
    <text>Constitutively synthesized.</text>
</comment>
<comment type="domain">
    <text evidence="2">The N-terminal nucleotide binding domain (NBD) (also known as the ATPase domain) is responsible for binding and hydrolyzing ATP. The C-terminal substrate-binding domain (SBD) (also known as peptide-binding domain) binds to the client/substrate proteins. The two domains are allosterically coupled so that, when ATP is bound to the NBD, the SBD binds relatively weakly to clients. When ADP is bound in the NBD, a conformational change enhances the affinity of the SBD for client proteins.</text>
</comment>
<comment type="PTM">
    <text evidence="2">Acetylated.</text>
</comment>
<comment type="PTM">
    <text evidence="7">ISGylated.</text>
</comment>
<comment type="PTM">
    <text evidence="2">Trimethylation at Lys-561 reduces fibrillar SNCA binding.</text>
</comment>
<comment type="similarity">
    <text evidence="15">Belongs to the heat shock protein 70 family.</text>
</comment>
<comment type="sequence caution" evidence="15">
    <conflict type="frameshift">
        <sequence resource="EMBL-CDS" id="BAE31508"/>
    </conflict>
</comment>
<organism>
    <name type="scientific">Mus musculus</name>
    <name type="common">Mouse</name>
    <dbReference type="NCBI Taxonomy" id="10090"/>
    <lineage>
        <taxon>Eukaryota</taxon>
        <taxon>Metazoa</taxon>
        <taxon>Chordata</taxon>
        <taxon>Craniata</taxon>
        <taxon>Vertebrata</taxon>
        <taxon>Euteleostomi</taxon>
        <taxon>Mammalia</taxon>
        <taxon>Eutheria</taxon>
        <taxon>Euarchontoglires</taxon>
        <taxon>Glires</taxon>
        <taxon>Rodentia</taxon>
        <taxon>Myomorpha</taxon>
        <taxon>Muroidea</taxon>
        <taxon>Muridae</taxon>
        <taxon>Murinae</taxon>
        <taxon>Mus</taxon>
        <taxon>Mus</taxon>
    </lineage>
</organism>
<dbReference type="EC" id="3.6.4.10" evidence="2"/>
<dbReference type="EMBL" id="M19141">
    <property type="protein sequence ID" value="AAA37869.1"/>
    <property type="molecule type" value="mRNA"/>
</dbReference>
<dbReference type="EMBL" id="U27129">
    <property type="protein sequence ID" value="AAC52836.1"/>
    <property type="molecule type" value="mRNA"/>
</dbReference>
<dbReference type="EMBL" id="U73744">
    <property type="protein sequence ID" value="AAB18391.1"/>
    <property type="molecule type" value="Genomic_DNA"/>
</dbReference>
<dbReference type="EMBL" id="AK035286">
    <property type="protein sequence ID" value="BAC29016.1"/>
    <property type="molecule type" value="mRNA"/>
</dbReference>
<dbReference type="EMBL" id="AK075935">
    <property type="protein sequence ID" value="BAC36065.1"/>
    <property type="molecule type" value="mRNA"/>
</dbReference>
<dbReference type="EMBL" id="AK145579">
    <property type="protein sequence ID" value="BAE26523.1"/>
    <property type="molecule type" value="mRNA"/>
</dbReference>
<dbReference type="EMBL" id="AK146708">
    <property type="protein sequence ID" value="BAE27374.1"/>
    <property type="molecule type" value="mRNA"/>
</dbReference>
<dbReference type="EMBL" id="AK146985">
    <property type="protein sequence ID" value="BAE27588.1"/>
    <property type="molecule type" value="mRNA"/>
</dbReference>
<dbReference type="EMBL" id="AK147864">
    <property type="protein sequence ID" value="BAE28187.1"/>
    <property type="molecule type" value="mRNA"/>
</dbReference>
<dbReference type="EMBL" id="AK150474">
    <property type="protein sequence ID" value="BAE29591.1"/>
    <property type="molecule type" value="mRNA"/>
</dbReference>
<dbReference type="EMBL" id="AK150498">
    <property type="protein sequence ID" value="BAE29612.1"/>
    <property type="molecule type" value="mRNA"/>
</dbReference>
<dbReference type="EMBL" id="AK150701">
    <property type="protein sequence ID" value="BAE29780.1"/>
    <property type="molecule type" value="mRNA"/>
</dbReference>
<dbReference type="EMBL" id="AK150958">
    <property type="protein sequence ID" value="BAE29990.1"/>
    <property type="molecule type" value="mRNA"/>
</dbReference>
<dbReference type="EMBL" id="AK151065">
    <property type="protein sequence ID" value="BAE30081.1"/>
    <property type="molecule type" value="mRNA"/>
</dbReference>
<dbReference type="EMBL" id="AK151127">
    <property type="protein sequence ID" value="BAE30135.1"/>
    <property type="molecule type" value="mRNA"/>
</dbReference>
<dbReference type="EMBL" id="AK151287">
    <property type="protein sequence ID" value="BAE30272.1"/>
    <property type="molecule type" value="mRNA"/>
</dbReference>
<dbReference type="EMBL" id="AK151435">
    <property type="protein sequence ID" value="BAE30398.1"/>
    <property type="molecule type" value="mRNA"/>
</dbReference>
<dbReference type="EMBL" id="AK151516">
    <property type="protein sequence ID" value="BAE30465.1"/>
    <property type="molecule type" value="mRNA"/>
</dbReference>
<dbReference type="EMBL" id="AK151537">
    <property type="protein sequence ID" value="BAE30484.1"/>
    <property type="molecule type" value="mRNA"/>
</dbReference>
<dbReference type="EMBL" id="AK151775">
    <property type="protein sequence ID" value="BAE30681.1"/>
    <property type="molecule type" value="mRNA"/>
</dbReference>
<dbReference type="EMBL" id="AK151808">
    <property type="protein sequence ID" value="BAE30707.1"/>
    <property type="molecule type" value="mRNA"/>
</dbReference>
<dbReference type="EMBL" id="AK151865">
    <property type="protein sequence ID" value="BAE30753.1"/>
    <property type="molecule type" value="mRNA"/>
</dbReference>
<dbReference type="EMBL" id="AK151892">
    <property type="protein sequence ID" value="BAE30776.1"/>
    <property type="molecule type" value="mRNA"/>
</dbReference>
<dbReference type="EMBL" id="AK151948">
    <property type="protein sequence ID" value="BAE30822.1"/>
    <property type="molecule type" value="mRNA"/>
</dbReference>
<dbReference type="EMBL" id="AK151997">
    <property type="protein sequence ID" value="BAE30861.1"/>
    <property type="molecule type" value="mRNA"/>
</dbReference>
<dbReference type="EMBL" id="AK152598">
    <property type="protein sequence ID" value="BAE31346.1"/>
    <property type="molecule type" value="mRNA"/>
</dbReference>
<dbReference type="EMBL" id="AK152697">
    <property type="protein sequence ID" value="BAE31427.1"/>
    <property type="molecule type" value="mRNA"/>
</dbReference>
<dbReference type="EMBL" id="AK152703">
    <property type="protein sequence ID" value="BAE31432.1"/>
    <property type="molecule type" value="mRNA"/>
</dbReference>
<dbReference type="EMBL" id="AK152803">
    <property type="protein sequence ID" value="BAE31508.1"/>
    <property type="status" value="ALT_FRAME"/>
    <property type="molecule type" value="mRNA"/>
</dbReference>
<dbReference type="EMBL" id="AK153032">
    <property type="protein sequence ID" value="BAE31664.1"/>
    <property type="molecule type" value="mRNA"/>
</dbReference>
<dbReference type="EMBL" id="AK153834">
    <property type="protein sequence ID" value="BAE32204.1"/>
    <property type="molecule type" value="mRNA"/>
</dbReference>
<dbReference type="EMBL" id="AK159479">
    <property type="protein sequence ID" value="BAE35116.1"/>
    <property type="molecule type" value="mRNA"/>
</dbReference>
<dbReference type="EMBL" id="AK164000">
    <property type="protein sequence ID" value="BAE37581.1"/>
    <property type="molecule type" value="mRNA"/>
</dbReference>
<dbReference type="EMBL" id="AK166643">
    <property type="protein sequence ID" value="BAE38912.1"/>
    <property type="molecule type" value="mRNA"/>
</dbReference>
<dbReference type="EMBL" id="AK166721">
    <property type="protein sequence ID" value="BAE38970.1"/>
    <property type="molecule type" value="mRNA"/>
</dbReference>
<dbReference type="EMBL" id="AK166767">
    <property type="protein sequence ID" value="BAE39005.1"/>
    <property type="molecule type" value="mRNA"/>
</dbReference>
<dbReference type="EMBL" id="AK166776">
    <property type="protein sequence ID" value="BAE39012.1"/>
    <property type="molecule type" value="mRNA"/>
</dbReference>
<dbReference type="EMBL" id="AK166808">
    <property type="protein sequence ID" value="BAE39036.1"/>
    <property type="molecule type" value="mRNA"/>
</dbReference>
<dbReference type="EMBL" id="AK166830">
    <property type="protein sequence ID" value="BAE39053.1"/>
    <property type="molecule type" value="mRNA"/>
</dbReference>
<dbReference type="EMBL" id="AK166846">
    <property type="protein sequence ID" value="BAE39065.1"/>
    <property type="molecule type" value="mRNA"/>
</dbReference>
<dbReference type="EMBL" id="AK166861">
    <property type="protein sequence ID" value="BAE39076.1"/>
    <property type="molecule type" value="mRNA"/>
</dbReference>
<dbReference type="EMBL" id="AK166873">
    <property type="protein sequence ID" value="BAE39084.1"/>
    <property type="molecule type" value="mRNA"/>
</dbReference>
<dbReference type="EMBL" id="AK166908">
    <property type="protein sequence ID" value="BAE39109.1"/>
    <property type="molecule type" value="mRNA"/>
</dbReference>
<dbReference type="EMBL" id="AK166910">
    <property type="protein sequence ID" value="BAE39111.1"/>
    <property type="molecule type" value="mRNA"/>
</dbReference>
<dbReference type="EMBL" id="AK166913">
    <property type="protein sequence ID" value="BAE39113.1"/>
    <property type="molecule type" value="mRNA"/>
</dbReference>
<dbReference type="EMBL" id="AK166933">
    <property type="protein sequence ID" value="BAE39127.1"/>
    <property type="molecule type" value="mRNA"/>
</dbReference>
<dbReference type="EMBL" id="AK167043">
    <property type="protein sequence ID" value="BAE39211.1"/>
    <property type="molecule type" value="mRNA"/>
</dbReference>
<dbReference type="EMBL" id="AK167121">
    <property type="protein sequence ID" value="BAE39269.1"/>
    <property type="molecule type" value="mRNA"/>
</dbReference>
<dbReference type="EMBL" id="AK167122">
    <property type="protein sequence ID" value="BAE39270.1"/>
    <property type="molecule type" value="mRNA"/>
</dbReference>
<dbReference type="EMBL" id="AK167134">
    <property type="protein sequence ID" value="BAE39280.1"/>
    <property type="molecule type" value="mRNA"/>
</dbReference>
<dbReference type="EMBL" id="AK167163">
    <property type="protein sequence ID" value="BAE39304.1"/>
    <property type="molecule type" value="mRNA"/>
</dbReference>
<dbReference type="EMBL" id="AK167218">
    <property type="protein sequence ID" value="BAE39344.1"/>
    <property type="molecule type" value="mRNA"/>
</dbReference>
<dbReference type="EMBL" id="AK167229">
    <property type="protein sequence ID" value="BAE39353.1"/>
    <property type="molecule type" value="mRNA"/>
</dbReference>
<dbReference type="EMBL" id="AK167845">
    <property type="protein sequence ID" value="BAE39865.1"/>
    <property type="molecule type" value="mRNA"/>
</dbReference>
<dbReference type="EMBL" id="AK167910">
    <property type="protein sequence ID" value="BAE39917.1"/>
    <property type="molecule type" value="mRNA"/>
</dbReference>
<dbReference type="EMBL" id="AK168492">
    <property type="protein sequence ID" value="BAE40379.1"/>
    <property type="molecule type" value="mRNA"/>
</dbReference>
<dbReference type="EMBL" id="AK168519">
    <property type="protein sequence ID" value="BAE40398.1"/>
    <property type="molecule type" value="mRNA"/>
</dbReference>
<dbReference type="EMBL" id="AK168542">
    <property type="protein sequence ID" value="BAE40419.1"/>
    <property type="molecule type" value="mRNA"/>
</dbReference>
<dbReference type="EMBL" id="AK168711">
    <property type="protein sequence ID" value="BAE40553.1"/>
    <property type="molecule type" value="mRNA"/>
</dbReference>
<dbReference type="EMBL" id="AK168750">
    <property type="protein sequence ID" value="BAE40590.1"/>
    <property type="molecule type" value="mRNA"/>
</dbReference>
<dbReference type="EMBL" id="AK168776">
    <property type="protein sequence ID" value="BAE40612.1"/>
    <property type="molecule type" value="mRNA"/>
</dbReference>
<dbReference type="EMBL" id="AK168887">
    <property type="protein sequence ID" value="BAE40704.1"/>
    <property type="molecule type" value="mRNA"/>
</dbReference>
<dbReference type="EMBL" id="AK168934">
    <property type="protein sequence ID" value="BAE40745.1"/>
    <property type="molecule type" value="mRNA"/>
</dbReference>
<dbReference type="EMBL" id="AK169093">
    <property type="protein sequence ID" value="BAE40876.1"/>
    <property type="molecule type" value="mRNA"/>
</dbReference>
<dbReference type="EMBL" id="AK169179">
    <property type="protein sequence ID" value="BAE40957.1"/>
    <property type="molecule type" value="mRNA"/>
</dbReference>
<dbReference type="EMBL" id="AK169236">
    <property type="protein sequence ID" value="BAE41004.1"/>
    <property type="molecule type" value="mRNA"/>
</dbReference>
<dbReference type="EMBL" id="AK169293">
    <property type="protein sequence ID" value="BAE41049.1"/>
    <property type="molecule type" value="mRNA"/>
</dbReference>
<dbReference type="EMBL" id="BC006722">
    <property type="protein sequence ID" value="AAH06722.1"/>
    <property type="molecule type" value="mRNA"/>
</dbReference>
<dbReference type="EMBL" id="BC066191">
    <property type="protein sequence ID" value="AAH66191.1"/>
    <property type="molecule type" value="mRNA"/>
</dbReference>
<dbReference type="EMBL" id="BC085486">
    <property type="protein sequence ID" value="AAH85486.1"/>
    <property type="molecule type" value="mRNA"/>
</dbReference>
<dbReference type="EMBL" id="BC089322">
    <property type="protein sequence ID" value="AAH89322.1"/>
    <property type="molecule type" value="mRNA"/>
</dbReference>
<dbReference type="EMBL" id="BC089457">
    <property type="protein sequence ID" value="AAH89457.1"/>
    <property type="molecule type" value="mRNA"/>
</dbReference>
<dbReference type="EMBL" id="BC106193">
    <property type="protein sequence ID" value="AAI06194.1"/>
    <property type="molecule type" value="mRNA"/>
</dbReference>
<dbReference type="EMBL" id="X54401">
    <property type="protein sequence ID" value="CAA38267.1"/>
    <property type="molecule type" value="Genomic_DNA"/>
</dbReference>
<dbReference type="EMBL" id="X54402">
    <property type="protein sequence ID" value="CAA38268.1"/>
    <property type="molecule type" value="Genomic_DNA"/>
</dbReference>
<dbReference type="EMBL" id="X54403">
    <property type="protein sequence ID" value="CAA38269.1"/>
    <property type="molecule type" value="Genomic_DNA"/>
</dbReference>
<dbReference type="CCDS" id="CCDS23083.1"/>
<dbReference type="PIR" id="A45935">
    <property type="entry name" value="A45935"/>
</dbReference>
<dbReference type="PIR" id="JC4853">
    <property type="entry name" value="JC4853"/>
</dbReference>
<dbReference type="RefSeq" id="NP_112442.2">
    <property type="nucleotide sequence ID" value="NM_031165.4"/>
</dbReference>
<dbReference type="PDB" id="3CQX">
    <property type="method" value="X-ray"/>
    <property type="resolution" value="2.30 A"/>
    <property type="chains" value="A/B=1-381"/>
</dbReference>
<dbReference type="PDBsum" id="3CQX"/>
<dbReference type="SMR" id="P63017"/>
<dbReference type="BioGRID" id="200428">
    <property type="interactions" value="182"/>
</dbReference>
<dbReference type="ComplexPortal" id="CPX-5825">
    <property type="entry name" value="PRP19-CDC5L complex"/>
</dbReference>
<dbReference type="CORUM" id="P63017"/>
<dbReference type="DIP" id="DIP-32353N"/>
<dbReference type="FunCoup" id="P63017">
    <property type="interactions" value="2937"/>
</dbReference>
<dbReference type="IntAct" id="P63017">
    <property type="interactions" value="51"/>
</dbReference>
<dbReference type="MINT" id="P63017"/>
<dbReference type="STRING" id="10090.ENSMUSP00000015800"/>
<dbReference type="ChEMBL" id="CHEMBL5169139"/>
<dbReference type="CarbonylDB" id="P63017"/>
<dbReference type="GlyGen" id="P63017">
    <property type="glycosylation" value="6 sites, 4 N-linked glycans (4 sites), 1 O-linked glycan (2 sites)"/>
</dbReference>
<dbReference type="iPTMnet" id="P63017"/>
<dbReference type="MetOSite" id="P63017"/>
<dbReference type="PhosphoSitePlus" id="P63017"/>
<dbReference type="SwissPalm" id="P63017"/>
<dbReference type="REPRODUCTION-2DPAGE" id="IPI00323357"/>
<dbReference type="REPRODUCTION-2DPAGE" id="P63017"/>
<dbReference type="REPRODUCTION-2DPAGE" id="Q6NZD0"/>
<dbReference type="CPTAC" id="non-CPTAC-3713"/>
<dbReference type="jPOST" id="P63017"/>
<dbReference type="PaxDb" id="10090-ENSMUSP00000015800"/>
<dbReference type="PeptideAtlas" id="P63017"/>
<dbReference type="ProteomicsDB" id="273196"/>
<dbReference type="Pumba" id="P63017"/>
<dbReference type="Antibodypedia" id="3675">
    <property type="antibodies" value="1139 antibodies from 42 providers"/>
</dbReference>
<dbReference type="DNASU" id="15481"/>
<dbReference type="Ensembl" id="ENSMUST00000015800.16">
    <property type="protein sequence ID" value="ENSMUSP00000015800.10"/>
    <property type="gene ID" value="ENSMUSG00000015656.18"/>
</dbReference>
<dbReference type="GeneID" id="15481"/>
<dbReference type="KEGG" id="mmu:15481"/>
<dbReference type="UCSC" id="uc009ozx.3">
    <property type="organism name" value="mouse"/>
</dbReference>
<dbReference type="AGR" id="MGI:105384"/>
<dbReference type="CTD" id="3312"/>
<dbReference type="MGI" id="MGI:105384">
    <property type="gene designation" value="Hspa8"/>
</dbReference>
<dbReference type="VEuPathDB" id="HostDB:ENSMUSG00000015656"/>
<dbReference type="eggNOG" id="KOG0101">
    <property type="taxonomic scope" value="Eukaryota"/>
</dbReference>
<dbReference type="GeneTree" id="ENSGT00950000183206"/>
<dbReference type="HOGENOM" id="CLU_005965_3_0_1"/>
<dbReference type="InParanoid" id="P63017"/>
<dbReference type="OMA" id="AYTKNQD"/>
<dbReference type="OrthoDB" id="2401965at2759"/>
<dbReference type="PhylomeDB" id="P63017"/>
<dbReference type="TreeFam" id="TF105042"/>
<dbReference type="Reactome" id="R-MMU-3371453">
    <property type="pathway name" value="Regulation of HSF1-mediated heat shock response"/>
</dbReference>
<dbReference type="Reactome" id="R-MMU-3371497">
    <property type="pathway name" value="HSP90 chaperone cycle for steroid hormone receptors (SHR) in the presence of ligand"/>
</dbReference>
<dbReference type="Reactome" id="R-MMU-3371568">
    <property type="pathway name" value="Attenuation phase"/>
</dbReference>
<dbReference type="Reactome" id="R-MMU-3371571">
    <property type="pathway name" value="HSF1-dependent transactivation"/>
</dbReference>
<dbReference type="Reactome" id="R-MMU-432720">
    <property type="pathway name" value="Lysosome Vesicle Biogenesis"/>
</dbReference>
<dbReference type="Reactome" id="R-MMU-432722">
    <property type="pathway name" value="Golgi Associated Vesicle Biogenesis"/>
</dbReference>
<dbReference type="Reactome" id="R-MMU-450408">
    <property type="pathway name" value="AUF1 (hnRNP D0) binds and destabilizes mRNA"/>
</dbReference>
<dbReference type="Reactome" id="R-MMU-6798695">
    <property type="pathway name" value="Neutrophil degranulation"/>
</dbReference>
<dbReference type="Reactome" id="R-MMU-72163">
    <property type="pathway name" value="mRNA Splicing - Major Pathway"/>
</dbReference>
<dbReference type="Reactome" id="R-MMU-8856828">
    <property type="pathway name" value="Clathrin-mediated endocytosis"/>
</dbReference>
<dbReference type="Reactome" id="R-MMU-8876725">
    <property type="pathway name" value="Protein methylation"/>
</dbReference>
<dbReference type="Reactome" id="R-MMU-888590">
    <property type="pathway name" value="GABA synthesis, release, reuptake and degradation"/>
</dbReference>
<dbReference type="Reactome" id="R-MMU-9833482">
    <property type="pathway name" value="PKR-mediated signaling"/>
</dbReference>
<dbReference type="BioGRID-ORCS" id="15481">
    <property type="hits" value="32 hits in 78 CRISPR screens"/>
</dbReference>
<dbReference type="CD-CODE" id="8F289D40">
    <property type="entry name" value="ELVA"/>
</dbReference>
<dbReference type="CD-CODE" id="CE726F99">
    <property type="entry name" value="Postsynaptic density"/>
</dbReference>
<dbReference type="ChiTaRS" id="Hspa8">
    <property type="organism name" value="mouse"/>
</dbReference>
<dbReference type="EvolutionaryTrace" id="P63017"/>
<dbReference type="PRO" id="PR:P63017"/>
<dbReference type="Proteomes" id="UP000000589">
    <property type="component" value="Chromosome 9"/>
</dbReference>
<dbReference type="RNAct" id="P63017">
    <property type="molecule type" value="protein"/>
</dbReference>
<dbReference type="Bgee" id="ENSMUSG00000015656">
    <property type="expression patterns" value="Expressed in embryonic post-anal tail and 124 other cell types or tissues"/>
</dbReference>
<dbReference type="ExpressionAtlas" id="P63017">
    <property type="expression patterns" value="baseline and differential"/>
</dbReference>
<dbReference type="GO" id="GO:0005776">
    <property type="term" value="C:autophagosome"/>
    <property type="evidence" value="ECO:0007669"/>
    <property type="project" value="Ensembl"/>
</dbReference>
<dbReference type="GO" id="GO:0009986">
    <property type="term" value="C:cell surface"/>
    <property type="evidence" value="ECO:0007669"/>
    <property type="project" value="Ensembl"/>
</dbReference>
<dbReference type="GO" id="GO:0005737">
    <property type="term" value="C:cytoplasm"/>
    <property type="evidence" value="ECO:0000314"/>
    <property type="project" value="AgBase"/>
</dbReference>
<dbReference type="GO" id="GO:0005829">
    <property type="term" value="C:cytosol"/>
    <property type="evidence" value="ECO:0000314"/>
    <property type="project" value="MGI"/>
</dbReference>
<dbReference type="GO" id="GO:0043198">
    <property type="term" value="C:dendritic shaft"/>
    <property type="evidence" value="ECO:0007669"/>
    <property type="project" value="Ensembl"/>
</dbReference>
<dbReference type="GO" id="GO:0043197">
    <property type="term" value="C:dendritic spine"/>
    <property type="evidence" value="ECO:0007669"/>
    <property type="project" value="Ensembl"/>
</dbReference>
<dbReference type="GO" id="GO:0070062">
    <property type="term" value="C:extracellular exosome"/>
    <property type="evidence" value="ECO:0000314"/>
    <property type="project" value="MGI"/>
</dbReference>
<dbReference type="GO" id="GO:0098978">
    <property type="term" value="C:glutamatergic synapse"/>
    <property type="evidence" value="ECO:0000314"/>
    <property type="project" value="SynGO"/>
</dbReference>
<dbReference type="GO" id="GO:0098690">
    <property type="term" value="C:glycinergic synapse"/>
    <property type="evidence" value="ECO:0000314"/>
    <property type="project" value="SynGO"/>
</dbReference>
<dbReference type="GO" id="GO:0005882">
    <property type="term" value="C:intermediate filament"/>
    <property type="evidence" value="ECO:0007669"/>
    <property type="project" value="Ensembl"/>
</dbReference>
<dbReference type="GO" id="GO:0005770">
    <property type="term" value="C:late endosome"/>
    <property type="evidence" value="ECO:0000314"/>
    <property type="project" value="ParkinsonsUK-UCL"/>
</dbReference>
<dbReference type="GO" id="GO:0031906">
    <property type="term" value="C:late endosome lumen"/>
    <property type="evidence" value="ECO:0000304"/>
    <property type="project" value="Reactome"/>
</dbReference>
<dbReference type="GO" id="GO:1990836">
    <property type="term" value="C:lysosomal matrix"/>
    <property type="evidence" value="ECO:0000266"/>
    <property type="project" value="MGI"/>
</dbReference>
<dbReference type="GO" id="GO:0005765">
    <property type="term" value="C:lysosomal membrane"/>
    <property type="evidence" value="ECO:0000250"/>
    <property type="project" value="UniProtKB"/>
</dbReference>
<dbReference type="GO" id="GO:0042470">
    <property type="term" value="C:melanosome"/>
    <property type="evidence" value="ECO:0007669"/>
    <property type="project" value="UniProtKB-SubCell"/>
</dbReference>
<dbReference type="GO" id="GO:0005874">
    <property type="term" value="C:microtubule"/>
    <property type="evidence" value="ECO:0007669"/>
    <property type="project" value="Ensembl"/>
</dbReference>
<dbReference type="GO" id="GO:0043209">
    <property type="term" value="C:myelin sheath"/>
    <property type="evidence" value="ECO:0007005"/>
    <property type="project" value="UniProtKB"/>
</dbReference>
<dbReference type="GO" id="GO:0005730">
    <property type="term" value="C:nucleolus"/>
    <property type="evidence" value="ECO:0007669"/>
    <property type="project" value="UniProtKB-SubCell"/>
</dbReference>
<dbReference type="GO" id="GO:0005634">
    <property type="term" value="C:nucleus"/>
    <property type="evidence" value="ECO:0000250"/>
    <property type="project" value="UniProtKB"/>
</dbReference>
<dbReference type="GO" id="GO:0043204">
    <property type="term" value="C:perikaryon"/>
    <property type="evidence" value="ECO:0007669"/>
    <property type="project" value="Ensembl"/>
</dbReference>
<dbReference type="GO" id="GO:0048471">
    <property type="term" value="C:perinuclear region of cytoplasm"/>
    <property type="evidence" value="ECO:0000314"/>
    <property type="project" value="MGI"/>
</dbReference>
<dbReference type="GO" id="GO:0001917">
    <property type="term" value="C:photoreceptor inner segment"/>
    <property type="evidence" value="ECO:0007669"/>
    <property type="project" value="Ensembl"/>
</dbReference>
<dbReference type="GO" id="GO:0098684">
    <property type="term" value="C:photoreceptor ribbon synapse"/>
    <property type="evidence" value="ECO:0000314"/>
    <property type="project" value="SynGO"/>
</dbReference>
<dbReference type="GO" id="GO:0014069">
    <property type="term" value="C:postsynaptic density"/>
    <property type="evidence" value="ECO:0007669"/>
    <property type="project" value="Ensembl"/>
</dbReference>
<dbReference type="GO" id="GO:0099634">
    <property type="term" value="C:postsynaptic specialization membrane"/>
    <property type="evidence" value="ECO:0000314"/>
    <property type="project" value="SynGO"/>
</dbReference>
<dbReference type="GO" id="GO:0098793">
    <property type="term" value="C:presynapse"/>
    <property type="evidence" value="ECO:0000314"/>
    <property type="project" value="SynGO"/>
</dbReference>
<dbReference type="GO" id="GO:0000974">
    <property type="term" value="C:Prp19 complex"/>
    <property type="evidence" value="ECO:0000250"/>
    <property type="project" value="UniProtKB"/>
</dbReference>
<dbReference type="GO" id="GO:1990904">
    <property type="term" value="C:ribonucleoprotein complex"/>
    <property type="evidence" value="ECO:0000250"/>
    <property type="project" value="UniProtKB"/>
</dbReference>
<dbReference type="GO" id="GO:0005681">
    <property type="term" value="C:spliceosomal complex"/>
    <property type="evidence" value="ECO:0000266"/>
    <property type="project" value="ComplexPortal"/>
</dbReference>
<dbReference type="GO" id="GO:0008021">
    <property type="term" value="C:synaptic vesicle"/>
    <property type="evidence" value="ECO:0007669"/>
    <property type="project" value="Ensembl"/>
</dbReference>
<dbReference type="GO" id="GO:0043195">
    <property type="term" value="C:terminal bouton"/>
    <property type="evidence" value="ECO:0007669"/>
    <property type="project" value="Ensembl"/>
</dbReference>
<dbReference type="GO" id="GO:0031686">
    <property type="term" value="F:A1 adenosine receptor binding"/>
    <property type="evidence" value="ECO:0007669"/>
    <property type="project" value="Ensembl"/>
</dbReference>
<dbReference type="GO" id="GO:0043531">
    <property type="term" value="F:ADP binding"/>
    <property type="evidence" value="ECO:0007669"/>
    <property type="project" value="Ensembl"/>
</dbReference>
<dbReference type="GO" id="GO:0005524">
    <property type="term" value="F:ATP binding"/>
    <property type="evidence" value="ECO:0007669"/>
    <property type="project" value="UniProtKB-KW"/>
</dbReference>
<dbReference type="GO" id="GO:0016887">
    <property type="term" value="F:ATP hydrolysis activity"/>
    <property type="evidence" value="ECO:0000314"/>
    <property type="project" value="MGI"/>
</dbReference>
<dbReference type="GO" id="GO:0140662">
    <property type="term" value="F:ATP-dependent protein folding chaperone"/>
    <property type="evidence" value="ECO:0007669"/>
    <property type="project" value="InterPro"/>
</dbReference>
<dbReference type="GO" id="GO:1990833">
    <property type="term" value="F:clathrin-uncoating ATPase activity"/>
    <property type="evidence" value="ECO:0007669"/>
    <property type="project" value="Ensembl"/>
</dbReference>
<dbReference type="GO" id="GO:0019899">
    <property type="term" value="F:enzyme binding"/>
    <property type="evidence" value="ECO:0007669"/>
    <property type="project" value="Ensembl"/>
</dbReference>
<dbReference type="GO" id="GO:0042277">
    <property type="term" value="F:peptide binding"/>
    <property type="evidence" value="ECO:0007669"/>
    <property type="project" value="Ensembl"/>
</dbReference>
<dbReference type="GO" id="GO:0001786">
    <property type="term" value="F:phosphatidylserine binding"/>
    <property type="evidence" value="ECO:0000314"/>
    <property type="project" value="ParkinsonsUK-UCL"/>
</dbReference>
<dbReference type="GO" id="GO:1904593">
    <property type="term" value="F:prostaglandin binding"/>
    <property type="evidence" value="ECO:0007669"/>
    <property type="project" value="Ensembl"/>
</dbReference>
<dbReference type="GO" id="GO:0030674">
    <property type="term" value="F:protein-macromolecule adaptor activity"/>
    <property type="evidence" value="ECO:0000250"/>
    <property type="project" value="UniProtKB"/>
</dbReference>
<dbReference type="GO" id="GO:0003723">
    <property type="term" value="F:RNA binding"/>
    <property type="evidence" value="ECO:0007669"/>
    <property type="project" value="Ensembl"/>
</dbReference>
<dbReference type="GO" id="GO:0051082">
    <property type="term" value="F:unfolded protein binding"/>
    <property type="evidence" value="ECO:0000353"/>
    <property type="project" value="MGI"/>
</dbReference>
<dbReference type="GO" id="GO:0071276">
    <property type="term" value="P:cellular response to cadmium ion"/>
    <property type="evidence" value="ECO:0007669"/>
    <property type="project" value="Ensembl"/>
</dbReference>
<dbReference type="GO" id="GO:0034605">
    <property type="term" value="P:cellular response to heat"/>
    <property type="evidence" value="ECO:0007669"/>
    <property type="project" value="Ensembl"/>
</dbReference>
<dbReference type="GO" id="GO:0070301">
    <property type="term" value="P:cellular response to hydrogen peroxide"/>
    <property type="evidence" value="ECO:0007669"/>
    <property type="project" value="Ensembl"/>
</dbReference>
<dbReference type="GO" id="GO:0021549">
    <property type="term" value="P:cerebellum development"/>
    <property type="evidence" value="ECO:0007669"/>
    <property type="project" value="Ensembl"/>
</dbReference>
<dbReference type="GO" id="GO:0051085">
    <property type="term" value="P:chaperone cofactor-dependent protein refolding"/>
    <property type="evidence" value="ECO:0000316"/>
    <property type="project" value="MGI"/>
</dbReference>
<dbReference type="GO" id="GO:0061684">
    <property type="term" value="P:chaperone-mediated autophagy"/>
    <property type="evidence" value="ECO:0000250"/>
    <property type="project" value="ParkinsonsUK-UCL"/>
</dbReference>
<dbReference type="GO" id="GO:1904764">
    <property type="term" value="P:chaperone-mediated autophagy translocation complex disassembly"/>
    <property type="evidence" value="ECO:0000250"/>
    <property type="project" value="ParkinsonsUK-UCL"/>
</dbReference>
<dbReference type="GO" id="GO:0061077">
    <property type="term" value="P:chaperone-mediated protein folding"/>
    <property type="evidence" value="ECO:0000314"/>
    <property type="project" value="SynGO"/>
</dbReference>
<dbReference type="GO" id="GO:0072318">
    <property type="term" value="P:clathrin coat disassembly"/>
    <property type="evidence" value="ECO:0000314"/>
    <property type="project" value="UniProtKB"/>
</dbReference>
<dbReference type="GO" id="GO:0044849">
    <property type="term" value="P:estrous cycle"/>
    <property type="evidence" value="ECO:0007669"/>
    <property type="project" value="Ensembl"/>
</dbReference>
<dbReference type="GO" id="GO:0030900">
    <property type="term" value="P:forebrain development"/>
    <property type="evidence" value="ECO:0007669"/>
    <property type="project" value="Ensembl"/>
</dbReference>
<dbReference type="GO" id="GO:0000082">
    <property type="term" value="P:G1/S transition of mitotic cell cycle"/>
    <property type="evidence" value="ECO:0007669"/>
    <property type="project" value="Ensembl"/>
</dbReference>
<dbReference type="GO" id="GO:0001822">
    <property type="term" value="P:kidney development"/>
    <property type="evidence" value="ECO:0007669"/>
    <property type="project" value="Ensembl"/>
</dbReference>
<dbReference type="GO" id="GO:0061738">
    <property type="term" value="P:late endosomal microautophagy"/>
    <property type="evidence" value="ECO:0000315"/>
    <property type="project" value="ParkinsonsUK-UCL"/>
</dbReference>
<dbReference type="GO" id="GO:0098880">
    <property type="term" value="P:maintenance of postsynaptic specialization structure"/>
    <property type="evidence" value="ECO:0007669"/>
    <property type="project" value="Ensembl"/>
</dbReference>
<dbReference type="GO" id="GO:0044788">
    <property type="term" value="P:modulation by host of viral process"/>
    <property type="evidence" value="ECO:0000315"/>
    <property type="project" value="AgBase"/>
</dbReference>
<dbReference type="GO" id="GO:0000398">
    <property type="term" value="P:mRNA splicing, via spliceosome"/>
    <property type="evidence" value="ECO:0000303"/>
    <property type="project" value="ComplexPortal"/>
</dbReference>
<dbReference type="GO" id="GO:0010667">
    <property type="term" value="P:negative regulation of cardiac muscle cell apoptotic process"/>
    <property type="evidence" value="ECO:0007669"/>
    <property type="project" value="Ensembl"/>
</dbReference>
<dbReference type="GO" id="GO:0045892">
    <property type="term" value="P:negative regulation of DNA-templated transcription"/>
    <property type="evidence" value="ECO:0000250"/>
    <property type="project" value="UniProtKB"/>
</dbReference>
<dbReference type="GO" id="GO:0044829">
    <property type="term" value="P:positive regulation by host of viral genome replication"/>
    <property type="evidence" value="ECO:0000315"/>
    <property type="project" value="AgBase"/>
</dbReference>
<dbReference type="GO" id="GO:0097214">
    <property type="term" value="P:positive regulation of lysosomal membrane permeability"/>
    <property type="evidence" value="ECO:0007669"/>
    <property type="project" value="Ensembl"/>
</dbReference>
<dbReference type="GO" id="GO:0048026">
    <property type="term" value="P:positive regulation of mRNA splicing, via spliceosome"/>
    <property type="evidence" value="ECO:0000315"/>
    <property type="project" value="MGI"/>
</dbReference>
<dbReference type="GO" id="GO:0050766">
    <property type="term" value="P:positive regulation of phagocytosis"/>
    <property type="evidence" value="ECO:0007669"/>
    <property type="project" value="Ensembl"/>
</dbReference>
<dbReference type="GO" id="GO:1904592">
    <property type="term" value="P:positive regulation of protein refolding"/>
    <property type="evidence" value="ECO:0007669"/>
    <property type="project" value="Ensembl"/>
</dbReference>
<dbReference type="GO" id="GO:0045862">
    <property type="term" value="P:positive regulation of proteolysis"/>
    <property type="evidence" value="ECO:0007669"/>
    <property type="project" value="Ensembl"/>
</dbReference>
<dbReference type="GO" id="GO:0001916">
    <property type="term" value="P:positive regulation of T cell mediated cytotoxicity"/>
    <property type="evidence" value="ECO:0007669"/>
    <property type="project" value="Ensembl"/>
</dbReference>
<dbReference type="GO" id="GO:0006457">
    <property type="term" value="P:protein folding"/>
    <property type="evidence" value="ECO:0000314"/>
    <property type="project" value="MGI"/>
</dbReference>
<dbReference type="GO" id="GO:0006606">
    <property type="term" value="P:protein import into nucleus"/>
    <property type="evidence" value="ECO:0007669"/>
    <property type="project" value="Ensembl"/>
</dbReference>
<dbReference type="GO" id="GO:0042026">
    <property type="term" value="P:protein refolding"/>
    <property type="evidence" value="ECO:0000250"/>
    <property type="project" value="ParkinsonsUK-UCL"/>
</dbReference>
<dbReference type="GO" id="GO:0061740">
    <property type="term" value="P:protein targeting to lysosome involved in chaperone-mediated autophagy"/>
    <property type="evidence" value="ECO:0000250"/>
    <property type="project" value="UniProtKB"/>
</dbReference>
<dbReference type="GO" id="GO:0044743">
    <property type="term" value="P:protein transmembrane import into intracellular organelle"/>
    <property type="evidence" value="ECO:0007669"/>
    <property type="project" value="Ensembl"/>
</dbReference>
<dbReference type="GO" id="GO:0032984">
    <property type="term" value="P:protein-containing complex disassembly"/>
    <property type="evidence" value="ECO:0000266"/>
    <property type="project" value="MGI"/>
</dbReference>
<dbReference type="GO" id="GO:0051726">
    <property type="term" value="P:regulation of cell cycle"/>
    <property type="evidence" value="ECO:0000314"/>
    <property type="project" value="MGI"/>
</dbReference>
<dbReference type="GO" id="GO:0099175">
    <property type="term" value="P:regulation of postsynapse organization"/>
    <property type="evidence" value="ECO:0000314"/>
    <property type="project" value="SynGO"/>
</dbReference>
<dbReference type="GO" id="GO:0061635">
    <property type="term" value="P:regulation of protein complex stability"/>
    <property type="evidence" value="ECO:0000250"/>
    <property type="project" value="ParkinsonsUK-UCL"/>
</dbReference>
<dbReference type="GO" id="GO:0014823">
    <property type="term" value="P:response to activity"/>
    <property type="evidence" value="ECO:0007669"/>
    <property type="project" value="Ensembl"/>
</dbReference>
<dbReference type="GO" id="GO:0032355">
    <property type="term" value="P:response to estradiol"/>
    <property type="evidence" value="ECO:0007669"/>
    <property type="project" value="Ensembl"/>
</dbReference>
<dbReference type="GO" id="GO:0045471">
    <property type="term" value="P:response to ethanol"/>
    <property type="evidence" value="ECO:0007669"/>
    <property type="project" value="Ensembl"/>
</dbReference>
<dbReference type="GO" id="GO:0010045">
    <property type="term" value="P:response to nickel cation"/>
    <property type="evidence" value="ECO:0007669"/>
    <property type="project" value="Ensembl"/>
</dbReference>
<dbReference type="GO" id="GO:1990834">
    <property type="term" value="P:response to odorant"/>
    <property type="evidence" value="ECO:0007669"/>
    <property type="project" value="Ensembl"/>
</dbReference>
<dbReference type="GO" id="GO:0032570">
    <property type="term" value="P:response to progesterone"/>
    <property type="evidence" value="ECO:0007669"/>
    <property type="project" value="Ensembl"/>
</dbReference>
<dbReference type="GO" id="GO:0042594">
    <property type="term" value="P:response to starvation"/>
    <property type="evidence" value="ECO:0007669"/>
    <property type="project" value="Ensembl"/>
</dbReference>
<dbReference type="GO" id="GO:0009410">
    <property type="term" value="P:response to xenobiotic stimulus"/>
    <property type="evidence" value="ECO:0007669"/>
    <property type="project" value="Ensembl"/>
</dbReference>
<dbReference type="GO" id="GO:0007519">
    <property type="term" value="P:skeletal muscle tissue development"/>
    <property type="evidence" value="ECO:0007669"/>
    <property type="project" value="Ensembl"/>
</dbReference>
<dbReference type="GO" id="GO:1990832">
    <property type="term" value="P:slow axonal transport"/>
    <property type="evidence" value="ECO:0007669"/>
    <property type="project" value="Ensembl"/>
</dbReference>
<dbReference type="CDD" id="cd10233">
    <property type="entry name" value="ASKHA_NBD_HSP70_HSPA1"/>
    <property type="match status" value="1"/>
</dbReference>
<dbReference type="FunFam" id="2.60.34.10:FF:000002">
    <property type="entry name" value="Heat shock 70 kDa"/>
    <property type="match status" value="1"/>
</dbReference>
<dbReference type="FunFam" id="3.30.420.40:FF:000172">
    <property type="entry name" value="Heat shock 70 kDa protein"/>
    <property type="match status" value="1"/>
</dbReference>
<dbReference type="FunFam" id="3.30.420.40:FF:000028">
    <property type="entry name" value="heat shock 70 kDa protein-like"/>
    <property type="match status" value="1"/>
</dbReference>
<dbReference type="FunFam" id="3.30.420.40:FF:000135">
    <property type="entry name" value="Heat shock cognate 71 kDa protein"/>
    <property type="match status" value="1"/>
</dbReference>
<dbReference type="FunFam" id="3.90.640.10:FF:000134">
    <property type="entry name" value="Heat shock cognate 71 kDa protein"/>
    <property type="match status" value="1"/>
</dbReference>
<dbReference type="FunFam" id="1.20.1270.10:FF:000003">
    <property type="entry name" value="heat shock cognate 71 kDa protein-like"/>
    <property type="match status" value="1"/>
</dbReference>
<dbReference type="FunFam" id="3.30.420.40:FF:000026">
    <property type="entry name" value="Heat shock protein 70"/>
    <property type="match status" value="1"/>
</dbReference>
<dbReference type="FunFam" id="3.30.30.30:FF:000025">
    <property type="entry name" value="Uncharacterized protein"/>
    <property type="match status" value="1"/>
</dbReference>
<dbReference type="Gene3D" id="1.20.1270.10">
    <property type="match status" value="1"/>
</dbReference>
<dbReference type="Gene3D" id="3.30.30.30">
    <property type="match status" value="1"/>
</dbReference>
<dbReference type="Gene3D" id="3.30.420.40">
    <property type="match status" value="2"/>
</dbReference>
<dbReference type="Gene3D" id="3.90.640.10">
    <property type="entry name" value="Actin, Chain A, domain 4"/>
    <property type="match status" value="1"/>
</dbReference>
<dbReference type="Gene3D" id="2.60.34.10">
    <property type="entry name" value="Substrate Binding Domain Of DNAk, Chain A, domain 1"/>
    <property type="match status" value="1"/>
</dbReference>
<dbReference type="InterPro" id="IPR043129">
    <property type="entry name" value="ATPase_NBD"/>
</dbReference>
<dbReference type="InterPro" id="IPR018181">
    <property type="entry name" value="Heat_shock_70_CS"/>
</dbReference>
<dbReference type="InterPro" id="IPR029048">
    <property type="entry name" value="HSP70_C_sf"/>
</dbReference>
<dbReference type="InterPro" id="IPR029047">
    <property type="entry name" value="HSP70_peptide-bd_sf"/>
</dbReference>
<dbReference type="InterPro" id="IPR013126">
    <property type="entry name" value="Hsp_70_fam"/>
</dbReference>
<dbReference type="NCBIfam" id="NF001413">
    <property type="entry name" value="PRK00290.1"/>
    <property type="match status" value="1"/>
</dbReference>
<dbReference type="PANTHER" id="PTHR19375">
    <property type="entry name" value="HEAT SHOCK PROTEIN 70KDA"/>
    <property type="match status" value="1"/>
</dbReference>
<dbReference type="Pfam" id="PF00012">
    <property type="entry name" value="HSP70"/>
    <property type="match status" value="1"/>
</dbReference>
<dbReference type="PRINTS" id="PR00301">
    <property type="entry name" value="HEATSHOCK70"/>
</dbReference>
<dbReference type="SUPFAM" id="SSF53067">
    <property type="entry name" value="Actin-like ATPase domain"/>
    <property type="match status" value="2"/>
</dbReference>
<dbReference type="SUPFAM" id="SSF100934">
    <property type="entry name" value="Heat shock protein 70kD (HSP70), C-terminal subdomain"/>
    <property type="match status" value="1"/>
</dbReference>
<dbReference type="SUPFAM" id="SSF100920">
    <property type="entry name" value="Heat shock protein 70kD (HSP70), peptide-binding domain"/>
    <property type="match status" value="1"/>
</dbReference>
<dbReference type="PROSITE" id="PS00297">
    <property type="entry name" value="HSP70_1"/>
    <property type="match status" value="1"/>
</dbReference>
<dbReference type="PROSITE" id="PS00329">
    <property type="entry name" value="HSP70_2"/>
    <property type="match status" value="1"/>
</dbReference>
<dbReference type="PROSITE" id="PS01036">
    <property type="entry name" value="HSP70_3"/>
    <property type="match status" value="1"/>
</dbReference>
<proteinExistence type="evidence at protein level"/>
<sequence length="646" mass="70871">MSKGPAVGIDLGTTYSCVGVFQHGKVEIIANDQGNRTTPSYVAFTDTERLIGDAAKNQVAMNPTNTVFDAKRLIGRRFDDAVVQSDMKHWPFMVVNDAGRPKVQVEYKGETKSFYPEEVSSMVLTKMKEIAEAYLGKTVTNAVVTVPAYFNDSQRQATKDAGTIAGLNVLRIINEPTAAAIAYGLDKKVGAERNVLIFDLGGGTFDVSILTIEDGIFEVKSTAGDTHLGGEDFDNRMVNHFIAEFKRKHKKDISENKRAVRRLRTACERAKRTLSSSTQASIEIDSLYEGIDFYTSITRARFEELNADLFRGTLDPVEKALRDAKLDKSQIHDIVLVGGSTRIPKIQKLLQDFFNGKELNKSINPDEAVAYGAAVQAAILSGDKSENVQDLLLLDVTPLSLGIETAGGVMTVLIKRNTTIPTKQTQTFTTYSDNQPGVLIQVYEGERAMTKDNNLLGKFELTGIPPAPRGVPQIEVTFDIDANGILNVSAVDKSTGKENKITITNDKGRLSKEDIERMVQEAEKYKAEDEKQRDKVSSKNSLESYAFNMKATVEDEKLQGKINDEDKQKILDKCNEIISWLDKNQTAEKEEFEHQQKELEKVCNPIITKLYQSAGGMPGGMPGGFPGGGAPPSGGASSGPTIEEVD</sequence>
<evidence type="ECO:0000250" key="1"/>
<evidence type="ECO:0000250" key="2">
    <source>
        <dbReference type="UniProtKB" id="P11142"/>
    </source>
</evidence>
<evidence type="ECO:0000250" key="3">
    <source>
        <dbReference type="UniProtKB" id="P19120"/>
    </source>
</evidence>
<evidence type="ECO:0000250" key="4">
    <source>
        <dbReference type="UniProtKB" id="P63018"/>
    </source>
</evidence>
<evidence type="ECO:0000256" key="5">
    <source>
        <dbReference type="SAM" id="MobiDB-lite"/>
    </source>
</evidence>
<evidence type="ECO:0000269" key="6">
    <source>
    </source>
</evidence>
<evidence type="ECO:0000269" key="7">
    <source>
    </source>
</evidence>
<evidence type="ECO:0000269" key="8">
    <source>
    </source>
</evidence>
<evidence type="ECO:0000269" key="9">
    <source>
    </source>
</evidence>
<evidence type="ECO:0000269" key="10">
    <source>
    </source>
</evidence>
<evidence type="ECO:0000269" key="11">
    <source>
    </source>
</evidence>
<evidence type="ECO:0000269" key="12">
    <source>
    </source>
</evidence>
<evidence type="ECO:0000303" key="13">
    <source>
    </source>
</evidence>
<evidence type="ECO:0000303" key="14">
    <source>
    </source>
</evidence>
<evidence type="ECO:0000305" key="15"/>
<evidence type="ECO:0000312" key="16">
    <source>
        <dbReference type="MGI" id="MGI:105384"/>
    </source>
</evidence>
<evidence type="ECO:0007744" key="17">
    <source>
    </source>
</evidence>
<evidence type="ECO:0007744" key="18">
    <source>
    </source>
</evidence>
<evidence type="ECO:0007829" key="19">
    <source>
        <dbReference type="PDB" id="3CQX"/>
    </source>
</evidence>
<reference key="1">
    <citation type="journal article" date="1988" name="Dev. Biol.">
        <title>Developmental regulation of a constitutively expressed mouse mRNA encoding a 72-kDa heat shock-like protein.</title>
        <authorList>
            <person name="Giebel L.B."/>
            <person name="Dworniczak B.P."/>
            <person name="Bautz E.K.F."/>
        </authorList>
    </citation>
    <scope>NUCLEOTIDE SEQUENCE [MRNA]</scope>
</reference>
<reference key="2">
    <citation type="journal article" date="1996" name="Gene">
        <title>Developmental regulation of murine integrin beta 1 subunit- and Hsc73-encoding genes in mammary gland: sequence of a new mouse Hsc73 cDNA.</title>
        <authorList>
            <person name="Soulier S."/>
            <person name="Vilotte J.-L."/>
            <person name="L'Huillier P.J."/>
            <person name="Mercier J.-C."/>
        </authorList>
    </citation>
    <scope>NUCLEOTIDE SEQUENCE [MRNA]</scope>
    <source>
        <strain>129</strain>
        <tissue>Mammary gland</tissue>
    </source>
</reference>
<reference key="3">
    <citation type="journal article" date="1999" name="Biochim. Biophys. Acta">
        <title>Characterization and expression of the mouse Hsc70 gene.</title>
        <authorList>
            <person name="Hunt C.R."/>
            <person name="Parsian A.J."/>
            <person name="Goswami P.C."/>
            <person name="Kozak C.A."/>
        </authorList>
    </citation>
    <scope>NUCLEOTIDE SEQUENCE [GENOMIC DNA]</scope>
    <source>
        <strain>129</strain>
    </source>
</reference>
<reference key="4">
    <citation type="journal article" date="2005" name="Science">
        <title>The transcriptional landscape of the mammalian genome.</title>
        <authorList>
            <person name="Carninci P."/>
            <person name="Kasukawa T."/>
            <person name="Katayama S."/>
            <person name="Gough J."/>
            <person name="Frith M.C."/>
            <person name="Maeda N."/>
            <person name="Oyama R."/>
            <person name="Ravasi T."/>
            <person name="Lenhard B."/>
            <person name="Wells C."/>
            <person name="Kodzius R."/>
            <person name="Shimokawa K."/>
            <person name="Bajic V.B."/>
            <person name="Brenner S.E."/>
            <person name="Batalov S."/>
            <person name="Forrest A.R."/>
            <person name="Zavolan M."/>
            <person name="Davis M.J."/>
            <person name="Wilming L.G."/>
            <person name="Aidinis V."/>
            <person name="Allen J.E."/>
            <person name="Ambesi-Impiombato A."/>
            <person name="Apweiler R."/>
            <person name="Aturaliya R.N."/>
            <person name="Bailey T.L."/>
            <person name="Bansal M."/>
            <person name="Baxter L."/>
            <person name="Beisel K.W."/>
            <person name="Bersano T."/>
            <person name="Bono H."/>
            <person name="Chalk A.M."/>
            <person name="Chiu K.P."/>
            <person name="Choudhary V."/>
            <person name="Christoffels A."/>
            <person name="Clutterbuck D.R."/>
            <person name="Crowe M.L."/>
            <person name="Dalla E."/>
            <person name="Dalrymple B.P."/>
            <person name="de Bono B."/>
            <person name="Della Gatta G."/>
            <person name="di Bernardo D."/>
            <person name="Down T."/>
            <person name="Engstrom P."/>
            <person name="Fagiolini M."/>
            <person name="Faulkner G."/>
            <person name="Fletcher C.F."/>
            <person name="Fukushima T."/>
            <person name="Furuno M."/>
            <person name="Futaki S."/>
            <person name="Gariboldi M."/>
            <person name="Georgii-Hemming P."/>
            <person name="Gingeras T.R."/>
            <person name="Gojobori T."/>
            <person name="Green R.E."/>
            <person name="Gustincich S."/>
            <person name="Harbers M."/>
            <person name="Hayashi Y."/>
            <person name="Hensch T.K."/>
            <person name="Hirokawa N."/>
            <person name="Hill D."/>
            <person name="Huminiecki L."/>
            <person name="Iacono M."/>
            <person name="Ikeo K."/>
            <person name="Iwama A."/>
            <person name="Ishikawa T."/>
            <person name="Jakt M."/>
            <person name="Kanapin A."/>
            <person name="Katoh M."/>
            <person name="Kawasawa Y."/>
            <person name="Kelso J."/>
            <person name="Kitamura H."/>
            <person name="Kitano H."/>
            <person name="Kollias G."/>
            <person name="Krishnan S.P."/>
            <person name="Kruger A."/>
            <person name="Kummerfeld S.K."/>
            <person name="Kurochkin I.V."/>
            <person name="Lareau L.F."/>
            <person name="Lazarevic D."/>
            <person name="Lipovich L."/>
            <person name="Liu J."/>
            <person name="Liuni S."/>
            <person name="McWilliam S."/>
            <person name="Madan Babu M."/>
            <person name="Madera M."/>
            <person name="Marchionni L."/>
            <person name="Matsuda H."/>
            <person name="Matsuzawa S."/>
            <person name="Miki H."/>
            <person name="Mignone F."/>
            <person name="Miyake S."/>
            <person name="Morris K."/>
            <person name="Mottagui-Tabar S."/>
            <person name="Mulder N."/>
            <person name="Nakano N."/>
            <person name="Nakauchi H."/>
            <person name="Ng P."/>
            <person name="Nilsson R."/>
            <person name="Nishiguchi S."/>
            <person name="Nishikawa S."/>
            <person name="Nori F."/>
            <person name="Ohara O."/>
            <person name="Okazaki Y."/>
            <person name="Orlando V."/>
            <person name="Pang K.C."/>
            <person name="Pavan W.J."/>
            <person name="Pavesi G."/>
            <person name="Pesole G."/>
            <person name="Petrovsky N."/>
            <person name="Piazza S."/>
            <person name="Reed J."/>
            <person name="Reid J.F."/>
            <person name="Ring B.Z."/>
            <person name="Ringwald M."/>
            <person name="Rost B."/>
            <person name="Ruan Y."/>
            <person name="Salzberg S.L."/>
            <person name="Sandelin A."/>
            <person name="Schneider C."/>
            <person name="Schoenbach C."/>
            <person name="Sekiguchi K."/>
            <person name="Semple C.A."/>
            <person name="Seno S."/>
            <person name="Sessa L."/>
            <person name="Sheng Y."/>
            <person name="Shibata Y."/>
            <person name="Shimada H."/>
            <person name="Shimada K."/>
            <person name="Silva D."/>
            <person name="Sinclair B."/>
            <person name="Sperling S."/>
            <person name="Stupka E."/>
            <person name="Sugiura K."/>
            <person name="Sultana R."/>
            <person name="Takenaka Y."/>
            <person name="Taki K."/>
            <person name="Tammoja K."/>
            <person name="Tan S.L."/>
            <person name="Tang S."/>
            <person name="Taylor M.S."/>
            <person name="Tegner J."/>
            <person name="Teichmann S.A."/>
            <person name="Ueda H.R."/>
            <person name="van Nimwegen E."/>
            <person name="Verardo R."/>
            <person name="Wei C.L."/>
            <person name="Yagi K."/>
            <person name="Yamanishi H."/>
            <person name="Zabarovsky E."/>
            <person name="Zhu S."/>
            <person name="Zimmer A."/>
            <person name="Hide W."/>
            <person name="Bult C."/>
            <person name="Grimmond S.M."/>
            <person name="Teasdale R.D."/>
            <person name="Liu E.T."/>
            <person name="Brusic V."/>
            <person name="Quackenbush J."/>
            <person name="Wahlestedt C."/>
            <person name="Mattick J.S."/>
            <person name="Hume D.A."/>
            <person name="Kai C."/>
            <person name="Sasaki D."/>
            <person name="Tomaru Y."/>
            <person name="Fukuda S."/>
            <person name="Kanamori-Katayama M."/>
            <person name="Suzuki M."/>
            <person name="Aoki J."/>
            <person name="Arakawa T."/>
            <person name="Iida J."/>
            <person name="Imamura K."/>
            <person name="Itoh M."/>
            <person name="Kato T."/>
            <person name="Kawaji H."/>
            <person name="Kawagashira N."/>
            <person name="Kawashima T."/>
            <person name="Kojima M."/>
            <person name="Kondo S."/>
            <person name="Konno H."/>
            <person name="Nakano K."/>
            <person name="Ninomiya N."/>
            <person name="Nishio T."/>
            <person name="Okada M."/>
            <person name="Plessy C."/>
            <person name="Shibata K."/>
            <person name="Shiraki T."/>
            <person name="Suzuki S."/>
            <person name="Tagami M."/>
            <person name="Waki K."/>
            <person name="Watahiki A."/>
            <person name="Okamura-Oho Y."/>
            <person name="Suzuki H."/>
            <person name="Kawai J."/>
            <person name="Hayashizaki Y."/>
        </authorList>
    </citation>
    <scope>NUCLEOTIDE SEQUENCE [LARGE SCALE MRNA]</scope>
    <source>
        <strain>C57BL/6J</strain>
        <strain>DBA/2J</strain>
        <tissue>Amnion</tissue>
        <tissue>Bone marrow</tissue>
        <tissue>Heart</tissue>
        <tissue>Kidney</tissue>
        <tissue>Liver</tissue>
        <tissue>Stomach</tissue>
        <tissue>Thymus</tissue>
        <tissue>Urinary bladder</tissue>
    </source>
</reference>
<reference key="5">
    <citation type="journal article" date="2004" name="Genome Res.">
        <title>The status, quality, and expansion of the NIH full-length cDNA project: the Mammalian Gene Collection (MGC).</title>
        <authorList>
            <consortium name="The MGC Project Team"/>
        </authorList>
    </citation>
    <scope>NUCLEOTIDE SEQUENCE [LARGE SCALE MRNA]</scope>
    <source>
        <strain>C57BL/6J</strain>
        <strain>FVB/N</strain>
        <tissue>Brain</tissue>
        <tissue>Embryo</tissue>
        <tissue>Embryonic germ cell</tissue>
        <tissue>Eye</tissue>
        <tissue>Mammary gland</tissue>
    </source>
</reference>
<reference key="6">
    <citation type="submission" date="2009-01" db="UniProtKB">
        <authorList>
            <person name="Lubec G."/>
            <person name="Kang S.U."/>
            <person name="Klug S."/>
            <person name="Sunyer B."/>
            <person name="Chen W.-Q."/>
        </authorList>
    </citation>
    <scope>PROTEIN SEQUENCE OF 4-49; 57-71; 77-102; 113-155; 160-188; 221-246; 300-319; 326-342; 349-357; 362-384; 424-447; 540-550 AND 584-597</scope>
    <scope>IDENTIFICATION BY MASS SPECTROMETRY</scope>
    <source>
        <strain>C57BL/6J</strain>
        <strain>OF1</strain>
        <tissue>Brain</tissue>
        <tissue>Hippocampus</tissue>
    </source>
</reference>
<reference key="7">
    <citation type="journal article" date="1990" name="Nucleic Acids Res.">
        <title>Mouse U14 snRNA is encoded in an intron of the mouse cognate hsc70 heat shock gene.</title>
        <authorList>
            <person name="Liu J."/>
            <person name="Maxwell E.S."/>
        </authorList>
    </citation>
    <scope>NUCLEOTIDE SEQUENCE [GENOMIC DNA] OF 333-383; 438-452 AND 580-587</scope>
</reference>
<reference key="8">
    <citation type="journal article" date="1998" name="Biochem. Biophys. Res. Commun.">
        <title>Association of HSP105 with HSC70 in high molecular mass complexes in mouse FM3A cells.</title>
        <authorList>
            <person name="Hatayama T."/>
            <person name="Yasuda K."/>
            <person name="Yasuda K."/>
        </authorList>
    </citation>
    <scope>INTERACTION WITH HSPH1</scope>
</reference>
<reference key="9">
    <citation type="journal article" date="2004" name="J. Biol. Chem.">
        <title>Hsp105alpha suppresses Hsc70 chaperone activity by inhibiting Hsc70 ATPase activity.</title>
        <authorList>
            <person name="Yamagishi N."/>
            <person name="Ishihara K."/>
            <person name="Hatayama T."/>
        </authorList>
    </citation>
    <scope>INTERACTION WITH HSPH1</scope>
</reference>
<reference key="10">
    <citation type="journal article" date="2005" name="Biochem. Biophys. Res. Commun.">
        <title>Proteomic identification of proteins conjugated to ISG15 in mouse and human cells.</title>
        <authorList>
            <person name="Giannakopoulos N.V."/>
            <person name="Luo J.K."/>
            <person name="Papov V."/>
            <person name="Zou W."/>
            <person name="Lenschow D.J."/>
            <person name="Jacobs B.S."/>
            <person name="Borden E.C."/>
            <person name="Li J."/>
            <person name="Virgin H.W."/>
            <person name="Zhang D.E."/>
        </authorList>
    </citation>
    <scope>ISGYLATION</scope>
</reference>
<reference key="11">
    <citation type="journal article" date="2006" name="DNA Cell Biol.">
        <title>The disordered amino-terminus of SIMPL interacts with members of the 70-kDa heat-shock protein family.</title>
        <authorList>
            <person name="Haag Breese E."/>
            <person name="Uversky V.N."/>
            <person name="Georgiadis M.M."/>
            <person name="Harrington M.A."/>
        </authorList>
    </citation>
    <scope>INTERACTION WITH IRAK1BP1</scope>
    <scope>IDENTIFICATION BY MASS SPECTROMETRY</scope>
</reference>
<reference key="12">
    <citation type="journal article" date="2010" name="Cell">
        <title>A tissue-specific atlas of mouse protein phosphorylation and expression.</title>
        <authorList>
            <person name="Huttlin E.L."/>
            <person name="Jedrychowski M.P."/>
            <person name="Elias J.E."/>
            <person name="Goswami T."/>
            <person name="Rad R."/>
            <person name="Beausoleil S.A."/>
            <person name="Villen J."/>
            <person name="Haas W."/>
            <person name="Sowa M.E."/>
            <person name="Gygi S.P."/>
        </authorList>
    </citation>
    <scope>IDENTIFICATION BY MASS SPECTROMETRY [LARGE SCALE ANALYSIS]</scope>
    <source>
        <tissue>Brain</tissue>
        <tissue>Brown adipose tissue</tissue>
        <tissue>Heart</tissue>
        <tissue>Kidney</tissue>
        <tissue>Liver</tissue>
        <tissue>Lung</tissue>
        <tissue>Pancreas</tissue>
        <tissue>Spleen</tissue>
        <tissue>Testis</tissue>
    </source>
</reference>
<reference key="13">
    <citation type="journal article" date="2010" name="Curr. Biol.">
        <title>Chaperone-assisted selective autophagy is essential for muscle maintenance.</title>
        <authorList>
            <person name="Arndt V."/>
            <person name="Dick N."/>
            <person name="Tawo R."/>
            <person name="Dreiseidler M."/>
            <person name="Wenzel D."/>
            <person name="Hesse M."/>
            <person name="Fuerst D.O."/>
            <person name="Saftig P."/>
            <person name="Saint R."/>
            <person name="Fleischmann B.K."/>
            <person name="Hoch M."/>
            <person name="Hoehfeld J."/>
        </authorList>
    </citation>
    <scope>INTERACTION WITH BAG3; HSPB8 AND STUB1 IN CASA COMPLEX</scope>
</reference>
<reference key="14">
    <citation type="journal article" date="2011" name="J. Exp. Med.">
        <title>Critical role for Gimap5 in the survival of mouse hematopoietic stem and progenitor cells.</title>
        <authorList>
            <person name="Chen Y."/>
            <person name="Yu M."/>
            <person name="Dai X."/>
            <person name="Zogg M."/>
            <person name="Wen R."/>
            <person name="Weiler H."/>
            <person name="Wang D."/>
        </authorList>
    </citation>
    <scope>INTERACTION WITH GIMAP5; BCL2L1 AND MCL1</scope>
</reference>
<reference key="15">
    <citation type="journal article" date="2013" name="J. Biol. Chem.">
        <title>Identification and characterization of a novel human methyltransferase modulating Hsp70 function through lysine methylation.</title>
        <authorList>
            <person name="Jakobsson M.E."/>
            <person name="Moen A."/>
            <person name="Bousset L."/>
            <person name="Egge-Jacobsen W."/>
            <person name="Kernstock S."/>
            <person name="Melki R."/>
            <person name="Falnes P.O."/>
        </authorList>
    </citation>
    <scope>METHYLATION AT LYS-561</scope>
</reference>
<reference key="16">
    <citation type="journal article" date="2013" name="Mol. Cell">
        <title>SIRT5-mediated lysine desuccinylation impacts diverse metabolic pathways.</title>
        <authorList>
            <person name="Park J."/>
            <person name="Chen Y."/>
            <person name="Tishkoff D.X."/>
            <person name="Peng C."/>
            <person name="Tan M."/>
            <person name="Dai L."/>
            <person name="Xie Z."/>
            <person name="Zhang Y."/>
            <person name="Zwaans B.M."/>
            <person name="Skinner M.E."/>
            <person name="Lombard D.B."/>
            <person name="Zhao Y."/>
        </authorList>
    </citation>
    <scope>ACETYLATION [LARGE SCALE ANALYSIS] AT LYS-108; LYS-246; LYS-319; LYS-328; LYS-512; LYS-524 AND LYS-601</scope>
    <scope>SUCCINYLATION [LARGE SCALE ANALYSIS] AT LYS-319 AND LYS-512</scope>
    <scope>IDENTIFICATION BY MASS SPECTROMETRY [LARGE SCALE ANALYSIS]</scope>
    <source>
        <tissue>Embryonic fibroblast</tissue>
        <tissue>Liver</tissue>
    </source>
</reference>
<reference key="17">
    <citation type="journal article" date="2014" name="Mol. Cell. Proteomics">
        <title>Immunoaffinity enrichment and mass spectrometry analysis of protein methylation.</title>
        <authorList>
            <person name="Guo A."/>
            <person name="Gu H."/>
            <person name="Zhou J."/>
            <person name="Mulhern D."/>
            <person name="Wang Y."/>
            <person name="Lee K.A."/>
            <person name="Yang V."/>
            <person name="Aguiar M."/>
            <person name="Kornhauser J."/>
            <person name="Jia X."/>
            <person name="Ren J."/>
            <person name="Beausoleil S.A."/>
            <person name="Silva J.C."/>
            <person name="Vemulapalli V."/>
            <person name="Bedford M.T."/>
            <person name="Comb M.J."/>
        </authorList>
    </citation>
    <scope>METHYLATION [LARGE SCALE ANALYSIS] AT ARG-469</scope>
    <scope>IDENTIFICATION BY MASS SPECTROMETRY [LARGE SCALE ANALYSIS]</scope>
    <source>
        <tissue>Brain</tissue>
        <tissue>Embryo</tissue>
    </source>
</reference>
<feature type="initiator methionine" description="Removed" evidence="2">
    <location>
        <position position="1"/>
    </location>
</feature>
<feature type="chain" id="PRO_0000078271" description="Heat shock cognate 71 kDa protein">
    <location>
        <begin position="2"/>
        <end position="646"/>
    </location>
</feature>
<feature type="region of interest" description="Nucleotide-binding domain (NBD)" evidence="2">
    <location>
        <begin position="2"/>
        <end position="386"/>
    </location>
</feature>
<feature type="region of interest" description="Interaction with BAG1" evidence="1">
    <location>
        <begin position="186"/>
        <end position="377"/>
    </location>
</feature>
<feature type="region of interest" description="Substrate-binding domain (SBD)" evidence="2">
    <location>
        <begin position="394"/>
        <end position="509"/>
    </location>
</feature>
<feature type="region of interest" description="Disordered" evidence="5">
    <location>
        <begin position="614"/>
        <end position="646"/>
    </location>
</feature>
<feature type="compositionally biased region" description="Gly residues" evidence="5">
    <location>
        <begin position="616"/>
        <end position="632"/>
    </location>
</feature>
<feature type="binding site" evidence="1">
    <location>
        <begin position="12"/>
        <end position="15"/>
    </location>
    <ligand>
        <name>ATP</name>
        <dbReference type="ChEBI" id="CHEBI:30616"/>
    </ligand>
</feature>
<feature type="binding site" evidence="3">
    <location>
        <position position="14"/>
    </location>
    <ligand>
        <name>ADP</name>
        <dbReference type="ChEBI" id="CHEBI:456216"/>
    </ligand>
</feature>
<feature type="binding site" evidence="3">
    <location>
        <position position="15"/>
    </location>
    <ligand>
        <name>ADP</name>
        <dbReference type="ChEBI" id="CHEBI:456216"/>
    </ligand>
</feature>
<feature type="binding site" evidence="1">
    <location>
        <position position="71"/>
    </location>
    <ligand>
        <name>ATP</name>
        <dbReference type="ChEBI" id="CHEBI:30616"/>
    </ligand>
</feature>
<feature type="binding site" evidence="1">
    <location>
        <begin position="202"/>
        <end position="204"/>
    </location>
    <ligand>
        <name>ATP</name>
        <dbReference type="ChEBI" id="CHEBI:30616"/>
    </ligand>
</feature>
<feature type="binding site" evidence="3">
    <location>
        <position position="202"/>
    </location>
    <ligand>
        <name>ADP</name>
        <dbReference type="ChEBI" id="CHEBI:456216"/>
    </ligand>
</feature>
<feature type="binding site" evidence="1">
    <location>
        <begin position="268"/>
        <end position="275"/>
    </location>
    <ligand>
        <name>ATP</name>
        <dbReference type="ChEBI" id="CHEBI:30616"/>
    </ligand>
</feature>
<feature type="binding site" evidence="3">
    <location>
        <position position="268"/>
    </location>
    <ligand>
        <name>ADP</name>
        <dbReference type="ChEBI" id="CHEBI:456216"/>
    </ligand>
</feature>
<feature type="binding site" evidence="3">
    <location>
        <position position="271"/>
    </location>
    <ligand>
        <name>ADP</name>
        <dbReference type="ChEBI" id="CHEBI:456216"/>
    </ligand>
</feature>
<feature type="binding site" evidence="3">
    <location>
        <position position="275"/>
    </location>
    <ligand>
        <name>ADP</name>
        <dbReference type="ChEBI" id="CHEBI:456216"/>
    </ligand>
</feature>
<feature type="binding site" evidence="1">
    <location>
        <begin position="339"/>
        <end position="342"/>
    </location>
    <ligand>
        <name>ATP</name>
        <dbReference type="ChEBI" id="CHEBI:30616"/>
    </ligand>
</feature>
<feature type="binding site" evidence="3">
    <location>
        <position position="339"/>
    </location>
    <ligand>
        <name>ADP</name>
        <dbReference type="ChEBI" id="CHEBI:456216"/>
    </ligand>
</feature>
<feature type="modified residue" description="N-acetylserine" evidence="2">
    <location>
        <position position="2"/>
    </location>
</feature>
<feature type="modified residue" description="N6-acetyllysine" evidence="17">
    <location>
        <position position="108"/>
    </location>
</feature>
<feature type="modified residue" description="Phosphoserine" evidence="2">
    <location>
        <position position="153"/>
    </location>
</feature>
<feature type="modified residue" description="N6-acetyllysine" evidence="17">
    <location>
        <position position="246"/>
    </location>
</feature>
<feature type="modified residue" description="N6-acetyllysine; alternate" evidence="17">
    <location>
        <position position="319"/>
    </location>
</feature>
<feature type="modified residue" description="N6-succinyllysine; alternate" evidence="17">
    <location>
        <position position="319"/>
    </location>
</feature>
<feature type="modified residue" description="N6-acetyllysine" evidence="17">
    <location>
        <position position="328"/>
    </location>
</feature>
<feature type="modified residue" description="Phosphoserine" evidence="2">
    <location>
        <position position="329"/>
    </location>
</feature>
<feature type="modified residue" description="Phosphoserine" evidence="2">
    <location>
        <position position="362"/>
    </location>
</feature>
<feature type="modified residue" description="Omega-N-methylarginine" evidence="18">
    <location>
        <position position="469"/>
    </location>
</feature>
<feature type="modified residue" description="N6-acetyllysine; alternate" evidence="17">
    <location>
        <position position="512"/>
    </location>
</feature>
<feature type="modified residue" description="N6-succinyllysine; alternate" evidence="17">
    <location>
        <position position="512"/>
    </location>
</feature>
<feature type="modified residue" description="N6-acetyllysine" evidence="17">
    <location>
        <position position="524"/>
    </location>
</feature>
<feature type="modified residue" description="Phosphoserine" evidence="2">
    <location>
        <position position="541"/>
    </location>
</feature>
<feature type="modified residue" description="N6,N6,N6-trimethyllysine; alternate" evidence="11">
    <location>
        <position position="561"/>
    </location>
</feature>
<feature type="modified residue" description="N6,N6,N6-trimethyllysine; by METTL21A; alternate" evidence="1">
    <location>
        <position position="561"/>
    </location>
</feature>
<feature type="modified residue" description="N6,N6-dimethyllysine; alternate" evidence="2">
    <location>
        <position position="561"/>
    </location>
</feature>
<feature type="modified residue" description="N6-acetyllysine" evidence="2">
    <location>
        <position position="589"/>
    </location>
</feature>
<feature type="modified residue" description="N6-acetyllysine" evidence="2">
    <location>
        <position position="597"/>
    </location>
</feature>
<feature type="modified residue" description="N6-acetyllysine" evidence="17">
    <location>
        <position position="601"/>
    </location>
</feature>
<feature type="cross-link" description="Glycyl lysine isopeptide (Lys-Gly) (interchain with G-Cter in SUMO1); alternate" evidence="2">
    <location>
        <position position="512"/>
    </location>
</feature>
<feature type="cross-link" description="Glycyl lysine isopeptide (Lys-Gly) (interchain with G-Cter in SUMO2); alternate" evidence="2">
    <location>
        <position position="512"/>
    </location>
</feature>
<feature type="sequence conflict" description="In Ref. 4; BAE28187." evidence="15" ref="4">
    <original>I</original>
    <variation>V</variation>
    <location>
        <position position="9"/>
    </location>
</feature>
<feature type="sequence conflict" description="In Ref. 4; BAE30081/BAE30861/BAE30753." evidence="15" ref="4">
    <original>N</original>
    <variation>K</variation>
    <location>
        <position position="35"/>
    </location>
</feature>
<feature type="sequence conflict" description="In Ref. 4; BAE31432/BAE31346." evidence="15" ref="4">
    <original>E</original>
    <variation>G</variation>
    <location>
        <position position="268"/>
    </location>
</feature>
<feature type="sequence conflict" description="In Ref. 4; BAE31508." evidence="15" ref="4">
    <original>R</original>
    <variation>G</variation>
    <location>
        <position position="269"/>
    </location>
</feature>
<feature type="sequence conflict" description="In Ref. 4; BAE31664." evidence="15" ref="4">
    <original>F</original>
    <variation>C</variation>
    <location>
        <position position="353"/>
    </location>
</feature>
<feature type="sequence conflict" description="In Ref. 1; AAA37869 and 3; AAB18391." evidence="15" ref="1 3">
    <original>F</original>
    <variation>L</variation>
    <location>
        <position position="428"/>
    </location>
</feature>
<feature type="sequence conflict" description="In Ref. 4; BAE30707." evidence="15" ref="4">
    <original>S</original>
    <variation>Y</variation>
    <location>
        <position position="432"/>
    </location>
</feature>
<feature type="sequence conflict" description="In Ref. 5; AAH66191." evidence="15" ref="5">
    <original>K</original>
    <variation>E</variation>
    <location>
        <position position="589"/>
    </location>
</feature>
<feature type="sequence conflict" description="In Ref. 4; BAE30272/BAE31427." evidence="15" ref="4">
    <original>V</original>
    <variation>M</variation>
    <location>
        <position position="645"/>
    </location>
</feature>
<feature type="strand" evidence="19">
    <location>
        <begin position="7"/>
        <end position="11"/>
    </location>
</feature>
<feature type="strand" evidence="19">
    <location>
        <begin position="13"/>
        <end position="22"/>
    </location>
</feature>
<feature type="strand" evidence="19">
    <location>
        <begin position="25"/>
        <end position="28"/>
    </location>
</feature>
<feature type="strand" evidence="19">
    <location>
        <begin position="36"/>
        <end position="39"/>
    </location>
</feature>
<feature type="strand" evidence="19">
    <location>
        <begin position="42"/>
        <end position="44"/>
    </location>
</feature>
<feature type="strand" evidence="19">
    <location>
        <begin position="49"/>
        <end position="51"/>
    </location>
</feature>
<feature type="helix" evidence="19">
    <location>
        <begin position="53"/>
        <end position="57"/>
    </location>
</feature>
<feature type="turn" evidence="19">
    <location>
        <begin position="58"/>
        <end position="61"/>
    </location>
</feature>
<feature type="helix" evidence="19">
    <location>
        <begin position="63"/>
        <end position="65"/>
    </location>
</feature>
<feature type="helix" evidence="19">
    <location>
        <begin position="70"/>
        <end position="72"/>
    </location>
</feature>
<feature type="turn" evidence="19">
    <location>
        <begin position="73"/>
        <end position="75"/>
    </location>
</feature>
<feature type="helix" evidence="19">
    <location>
        <begin position="81"/>
        <end position="86"/>
    </location>
</feature>
<feature type="turn" evidence="19">
    <location>
        <begin position="87"/>
        <end position="89"/>
    </location>
</feature>
<feature type="strand" evidence="19">
    <location>
        <begin position="91"/>
        <end position="97"/>
    </location>
</feature>
<feature type="strand" evidence="19">
    <location>
        <begin position="100"/>
        <end position="107"/>
    </location>
</feature>
<feature type="strand" evidence="19">
    <location>
        <begin position="110"/>
        <end position="114"/>
    </location>
</feature>
<feature type="helix" evidence="19">
    <location>
        <begin position="116"/>
        <end position="135"/>
    </location>
</feature>
<feature type="strand" evidence="19">
    <location>
        <begin position="141"/>
        <end position="146"/>
    </location>
</feature>
<feature type="helix" evidence="19">
    <location>
        <begin position="152"/>
        <end position="164"/>
    </location>
</feature>
<feature type="strand" evidence="19">
    <location>
        <begin position="168"/>
        <end position="174"/>
    </location>
</feature>
<feature type="helix" evidence="19">
    <location>
        <begin position="175"/>
        <end position="182"/>
    </location>
</feature>
<feature type="turn" evidence="19">
    <location>
        <begin position="183"/>
        <end position="186"/>
    </location>
</feature>
<feature type="strand" evidence="19">
    <location>
        <begin position="187"/>
        <end position="200"/>
    </location>
</feature>
<feature type="strand" evidence="19">
    <location>
        <begin position="205"/>
        <end position="213"/>
    </location>
</feature>
<feature type="strand" evidence="19">
    <location>
        <begin position="216"/>
        <end position="225"/>
    </location>
</feature>
<feature type="helix" evidence="19">
    <location>
        <begin position="230"/>
        <end position="249"/>
    </location>
</feature>
<feature type="helix" evidence="19">
    <location>
        <begin position="257"/>
        <end position="273"/>
    </location>
</feature>
<feature type="turn" evidence="19">
    <location>
        <begin position="274"/>
        <end position="276"/>
    </location>
</feature>
<feature type="strand" evidence="19">
    <location>
        <begin position="278"/>
        <end position="288"/>
    </location>
</feature>
<feature type="strand" evidence="19">
    <location>
        <begin position="291"/>
        <end position="298"/>
    </location>
</feature>
<feature type="helix" evidence="19">
    <location>
        <begin position="299"/>
        <end position="312"/>
    </location>
</feature>
<feature type="helix" evidence="19">
    <location>
        <begin position="314"/>
        <end position="324"/>
    </location>
</feature>
<feature type="helix" evidence="19">
    <location>
        <begin position="328"/>
        <end position="330"/>
    </location>
</feature>
<feature type="strand" evidence="19">
    <location>
        <begin position="333"/>
        <end position="338"/>
    </location>
</feature>
<feature type="helix" evidence="19">
    <location>
        <begin position="339"/>
        <end position="342"/>
    </location>
</feature>
<feature type="helix" evidence="19">
    <location>
        <begin position="344"/>
        <end position="353"/>
    </location>
</feature>
<feature type="turn" evidence="19">
    <location>
        <begin position="354"/>
        <end position="356"/>
    </location>
</feature>
<feature type="turn" evidence="19">
    <location>
        <begin position="365"/>
        <end position="367"/>
    </location>
</feature>
<feature type="helix" evidence="19">
    <location>
        <begin position="368"/>
        <end position="380"/>
    </location>
</feature>
<accession>P63017</accession>
<accession>P08109</accession>
<accession>P12225</accession>
<accession>Q3U6R0</accession>
<accession>Q3U764</accession>
<accession>Q3U7D7</accession>
<accession>Q3U7E2</accession>
<accession>Q3U9B4</accession>
<accession>Q3U9G0</accession>
<accession>Q3UGM0</accession>
<accession>Q5FWJ6</accession>
<accession>Q62373</accession>
<accession>Q62374</accession>
<accession>Q62375</accession>
<accession>Q6NZD0</accession>
<keyword id="KW-0002">3D-structure</keyword>
<keyword id="KW-0007">Acetylation</keyword>
<keyword id="KW-0067">ATP-binding</keyword>
<keyword id="KW-0072">Autophagy</keyword>
<keyword id="KW-1003">Cell membrane</keyword>
<keyword id="KW-0143">Chaperone</keyword>
<keyword id="KW-0963">Cytoplasm</keyword>
<keyword id="KW-0903">Direct protein sequencing</keyword>
<keyword id="KW-0378">Hydrolase</keyword>
<keyword id="KW-1017">Isopeptide bond</keyword>
<keyword id="KW-0458">Lysosome</keyword>
<keyword id="KW-0472">Membrane</keyword>
<keyword id="KW-0488">Methylation</keyword>
<keyword id="KW-0507">mRNA processing</keyword>
<keyword id="KW-0508">mRNA splicing</keyword>
<keyword id="KW-0547">Nucleotide-binding</keyword>
<keyword id="KW-0539">Nucleus</keyword>
<keyword id="KW-0597">Phosphoprotein</keyword>
<keyword id="KW-1185">Reference proteome</keyword>
<keyword id="KW-0678">Repressor</keyword>
<keyword id="KW-0747">Spliceosome</keyword>
<keyword id="KW-0346">Stress response</keyword>
<keyword id="KW-0804">Transcription</keyword>
<keyword id="KW-0805">Transcription regulation</keyword>
<keyword id="KW-0832">Ubl conjugation</keyword>
<name>HSP7C_MOUSE</name>
<protein>
    <recommendedName>
        <fullName evidence="15">Heat shock cognate 71 kDa protein</fullName>
        <ecNumber evidence="2">3.6.4.10</ecNumber>
    </recommendedName>
    <alternativeName>
        <fullName>Heat shock 70 kDa protein 8</fullName>
    </alternativeName>
</protein>
<gene>
    <name evidence="16" type="primary">Hspa8</name>
    <name evidence="13" type="synonym">Hsc70</name>
    <name evidence="14" type="synonym">Hsc73</name>
</gene>